<gene>
    <name evidence="1" type="primary">ribH</name>
    <name type="ordered locus">CTC_00674</name>
</gene>
<protein>
    <recommendedName>
        <fullName evidence="1">6,7-dimethyl-8-ribityllumazine synthase</fullName>
        <shortName evidence="1">DMRL synthase</shortName>
        <shortName evidence="1">LS</shortName>
        <shortName evidence="1">Lumazine synthase</shortName>
        <ecNumber evidence="1">2.5.1.78</ecNumber>
    </recommendedName>
</protein>
<keyword id="KW-1185">Reference proteome</keyword>
<keyword id="KW-0686">Riboflavin biosynthesis</keyword>
<keyword id="KW-0808">Transferase</keyword>
<comment type="function">
    <text evidence="1">Catalyzes the formation of 6,7-dimethyl-8-ribityllumazine by condensation of 5-amino-6-(D-ribitylamino)uracil with 3,4-dihydroxy-2-butanone 4-phosphate. This is the penultimate step in the biosynthesis of riboflavin.</text>
</comment>
<comment type="catalytic activity">
    <reaction evidence="1">
        <text>(2S)-2-hydroxy-3-oxobutyl phosphate + 5-amino-6-(D-ribitylamino)uracil = 6,7-dimethyl-8-(1-D-ribityl)lumazine + phosphate + 2 H2O + H(+)</text>
        <dbReference type="Rhea" id="RHEA:26152"/>
        <dbReference type="ChEBI" id="CHEBI:15377"/>
        <dbReference type="ChEBI" id="CHEBI:15378"/>
        <dbReference type="ChEBI" id="CHEBI:15934"/>
        <dbReference type="ChEBI" id="CHEBI:43474"/>
        <dbReference type="ChEBI" id="CHEBI:58201"/>
        <dbReference type="ChEBI" id="CHEBI:58830"/>
        <dbReference type="EC" id="2.5.1.78"/>
    </reaction>
</comment>
<comment type="pathway">
    <text evidence="1">Cofactor biosynthesis; riboflavin biosynthesis; riboflavin from 2-hydroxy-3-oxobutyl phosphate and 5-amino-6-(D-ribitylamino)uracil: step 1/2.</text>
</comment>
<comment type="similarity">
    <text evidence="1">Belongs to the DMRL synthase family.</text>
</comment>
<evidence type="ECO:0000255" key="1">
    <source>
        <dbReference type="HAMAP-Rule" id="MF_00178"/>
    </source>
</evidence>
<accession>Q897Q7</accession>
<proteinExistence type="inferred from homology"/>
<feature type="chain" id="PRO_0000134745" description="6,7-dimethyl-8-ribityllumazine synthase">
    <location>
        <begin position="1"/>
        <end position="153"/>
    </location>
</feature>
<feature type="active site" description="Proton donor" evidence="1">
    <location>
        <position position="88"/>
    </location>
</feature>
<feature type="binding site" evidence="1">
    <location>
        <position position="22"/>
    </location>
    <ligand>
        <name>5-amino-6-(D-ribitylamino)uracil</name>
        <dbReference type="ChEBI" id="CHEBI:15934"/>
    </ligand>
</feature>
<feature type="binding site" evidence="1">
    <location>
        <begin position="56"/>
        <end position="58"/>
    </location>
    <ligand>
        <name>5-amino-6-(D-ribitylamino)uracil</name>
        <dbReference type="ChEBI" id="CHEBI:15934"/>
    </ligand>
</feature>
<feature type="binding site" evidence="1">
    <location>
        <begin position="80"/>
        <end position="82"/>
    </location>
    <ligand>
        <name>5-amino-6-(D-ribitylamino)uracil</name>
        <dbReference type="ChEBI" id="CHEBI:15934"/>
    </ligand>
</feature>
<feature type="binding site" evidence="1">
    <location>
        <begin position="85"/>
        <end position="86"/>
    </location>
    <ligand>
        <name>(2S)-2-hydroxy-3-oxobutyl phosphate</name>
        <dbReference type="ChEBI" id="CHEBI:58830"/>
    </ligand>
</feature>
<feature type="binding site" evidence="1">
    <location>
        <position position="113"/>
    </location>
    <ligand>
        <name>5-amino-6-(D-ribitylamino)uracil</name>
        <dbReference type="ChEBI" id="CHEBI:15934"/>
    </ligand>
</feature>
<feature type="binding site" evidence="1">
    <location>
        <position position="127"/>
    </location>
    <ligand>
        <name>(2S)-2-hydroxy-3-oxobutyl phosphate</name>
        <dbReference type="ChEBI" id="CHEBI:58830"/>
    </ligand>
</feature>
<reference key="1">
    <citation type="journal article" date="2003" name="Proc. Natl. Acad. Sci. U.S.A.">
        <title>The genome sequence of Clostridium tetani, the causative agent of tetanus disease.</title>
        <authorList>
            <person name="Brueggemann H."/>
            <person name="Baeumer S."/>
            <person name="Fricke W.F."/>
            <person name="Wiezer A."/>
            <person name="Liesegang H."/>
            <person name="Decker I."/>
            <person name="Herzberg C."/>
            <person name="Martinez-Arias R."/>
            <person name="Merkl R."/>
            <person name="Henne A."/>
            <person name="Gottschalk G."/>
        </authorList>
    </citation>
    <scope>NUCLEOTIDE SEQUENCE [LARGE SCALE GENOMIC DNA]</scope>
    <source>
        <strain>Massachusetts / E88</strain>
    </source>
</reference>
<dbReference type="EC" id="2.5.1.78" evidence="1"/>
<dbReference type="EMBL" id="AE015927">
    <property type="protein sequence ID" value="AAO35279.1"/>
    <property type="molecule type" value="Genomic_DNA"/>
</dbReference>
<dbReference type="RefSeq" id="WP_011098945.1">
    <property type="nucleotide sequence ID" value="NC_004557.1"/>
</dbReference>
<dbReference type="SMR" id="Q897Q7"/>
<dbReference type="STRING" id="212717.CTC_00674"/>
<dbReference type="GeneID" id="24253022"/>
<dbReference type="KEGG" id="ctc:CTC_00674"/>
<dbReference type="HOGENOM" id="CLU_089358_1_1_9"/>
<dbReference type="OrthoDB" id="9809709at2"/>
<dbReference type="UniPathway" id="UPA00275">
    <property type="reaction ID" value="UER00404"/>
</dbReference>
<dbReference type="Proteomes" id="UP000001412">
    <property type="component" value="Chromosome"/>
</dbReference>
<dbReference type="GO" id="GO:0005829">
    <property type="term" value="C:cytosol"/>
    <property type="evidence" value="ECO:0007669"/>
    <property type="project" value="TreeGrafter"/>
</dbReference>
<dbReference type="GO" id="GO:0009349">
    <property type="term" value="C:riboflavin synthase complex"/>
    <property type="evidence" value="ECO:0007669"/>
    <property type="project" value="InterPro"/>
</dbReference>
<dbReference type="GO" id="GO:0000906">
    <property type="term" value="F:6,7-dimethyl-8-ribityllumazine synthase activity"/>
    <property type="evidence" value="ECO:0007669"/>
    <property type="project" value="UniProtKB-UniRule"/>
</dbReference>
<dbReference type="GO" id="GO:0009231">
    <property type="term" value="P:riboflavin biosynthetic process"/>
    <property type="evidence" value="ECO:0007669"/>
    <property type="project" value="UniProtKB-UniRule"/>
</dbReference>
<dbReference type="CDD" id="cd09209">
    <property type="entry name" value="Lumazine_synthase-I"/>
    <property type="match status" value="1"/>
</dbReference>
<dbReference type="FunFam" id="3.40.50.960:FF:000001">
    <property type="entry name" value="6,7-dimethyl-8-ribityllumazine synthase"/>
    <property type="match status" value="1"/>
</dbReference>
<dbReference type="Gene3D" id="3.40.50.960">
    <property type="entry name" value="Lumazine/riboflavin synthase"/>
    <property type="match status" value="1"/>
</dbReference>
<dbReference type="HAMAP" id="MF_00178">
    <property type="entry name" value="Lumazine_synth"/>
    <property type="match status" value="1"/>
</dbReference>
<dbReference type="InterPro" id="IPR034964">
    <property type="entry name" value="LS"/>
</dbReference>
<dbReference type="InterPro" id="IPR002180">
    <property type="entry name" value="LS/RS"/>
</dbReference>
<dbReference type="InterPro" id="IPR036467">
    <property type="entry name" value="LS/RS_sf"/>
</dbReference>
<dbReference type="NCBIfam" id="TIGR00114">
    <property type="entry name" value="lumazine-synth"/>
    <property type="match status" value="1"/>
</dbReference>
<dbReference type="NCBIfam" id="NF000812">
    <property type="entry name" value="PRK00061.1-4"/>
    <property type="match status" value="1"/>
</dbReference>
<dbReference type="PANTHER" id="PTHR21058:SF0">
    <property type="entry name" value="6,7-DIMETHYL-8-RIBITYLLUMAZINE SYNTHASE"/>
    <property type="match status" value="1"/>
</dbReference>
<dbReference type="PANTHER" id="PTHR21058">
    <property type="entry name" value="6,7-DIMETHYL-8-RIBITYLLUMAZINE SYNTHASE DMRL SYNTHASE LUMAZINE SYNTHASE"/>
    <property type="match status" value="1"/>
</dbReference>
<dbReference type="Pfam" id="PF00885">
    <property type="entry name" value="DMRL_synthase"/>
    <property type="match status" value="1"/>
</dbReference>
<dbReference type="SUPFAM" id="SSF52121">
    <property type="entry name" value="Lumazine synthase"/>
    <property type="match status" value="1"/>
</dbReference>
<name>RISB_CLOTE</name>
<sequence length="153" mass="16436">MNIIEGKLIGQSLKFGITIGRFNEFIGGKLLDGAVDALIRHGVDEKDIEIAWVPGAFEIPLIAKKMAKSKKYDGIICLGAVIRGATTHYDYVASEVSKGIAKITLDEEVPVIFGVLTTENIEQAIERAGTKAGNKGYEAACTAIEMANIINII</sequence>
<organism>
    <name type="scientific">Clostridium tetani (strain Massachusetts / E88)</name>
    <dbReference type="NCBI Taxonomy" id="212717"/>
    <lineage>
        <taxon>Bacteria</taxon>
        <taxon>Bacillati</taxon>
        <taxon>Bacillota</taxon>
        <taxon>Clostridia</taxon>
        <taxon>Eubacteriales</taxon>
        <taxon>Clostridiaceae</taxon>
        <taxon>Clostridium</taxon>
    </lineage>
</organism>